<feature type="chain" id="PRO_0000304233" description="Porphobilinogen deaminase">
    <location>
        <begin position="1"/>
        <end position="309"/>
    </location>
</feature>
<feature type="modified residue" description="S-(dipyrrolylmethanemethyl)cysteine" evidence="1">
    <location>
        <position position="243"/>
    </location>
</feature>
<gene>
    <name evidence="1" type="primary">hemC</name>
    <name type="ordered locus">Dgeo_0093</name>
</gene>
<sequence length="309" mass="33266">MRTVTVGTRGSALALAQTRWVVARLKEEWPDTDFRIQTISTKGDRDRAALQSLAQKGDKGFWVKEIEDALLAGRIDIAVHSLKDLPTEQPEGLEIASIPKRVDARDVLIGKDGMKRLEDLPSGARVGTSSVRRKAFLRAYRPDLQILDLRGNIDTRLAALGTPDYDAIVLAAAGLIRTEMRHRIDEFIDPDLLLPAPGQGALALETRADDDLSIEVVYAIHDHATDDRVTAEREFLAGLGAGCMAPVGAHATLKDGVLTLEGWVGALDGSQVIRATTSGDPAECADLGAELAADMLGQGAQQLIEAAHR</sequence>
<comment type="function">
    <text evidence="1">Tetrapolymerization of the monopyrrole PBG into the hydroxymethylbilane pre-uroporphyrinogen in several discrete steps.</text>
</comment>
<comment type="catalytic activity">
    <reaction evidence="1">
        <text>4 porphobilinogen + H2O = hydroxymethylbilane + 4 NH4(+)</text>
        <dbReference type="Rhea" id="RHEA:13185"/>
        <dbReference type="ChEBI" id="CHEBI:15377"/>
        <dbReference type="ChEBI" id="CHEBI:28938"/>
        <dbReference type="ChEBI" id="CHEBI:57845"/>
        <dbReference type="ChEBI" id="CHEBI:58126"/>
        <dbReference type="EC" id="2.5.1.61"/>
    </reaction>
</comment>
<comment type="cofactor">
    <cofactor evidence="1">
        <name>dipyrromethane</name>
        <dbReference type="ChEBI" id="CHEBI:60342"/>
    </cofactor>
    <text evidence="1">Binds 1 dipyrromethane group covalently.</text>
</comment>
<comment type="pathway">
    <text evidence="1">Porphyrin-containing compound metabolism; protoporphyrin-IX biosynthesis; coproporphyrinogen-III from 5-aminolevulinate: step 2/4.</text>
</comment>
<comment type="subunit">
    <text evidence="1">Monomer.</text>
</comment>
<comment type="miscellaneous">
    <text evidence="1">The porphobilinogen subunits are added to the dipyrromethane group.</text>
</comment>
<comment type="similarity">
    <text evidence="1">Belongs to the HMBS family.</text>
</comment>
<dbReference type="EC" id="2.5.1.61" evidence="1"/>
<dbReference type="EMBL" id="CP000359">
    <property type="protein sequence ID" value="ABF44396.1"/>
    <property type="molecule type" value="Genomic_DNA"/>
</dbReference>
<dbReference type="RefSeq" id="WP_011529243.1">
    <property type="nucleotide sequence ID" value="NC_008025.1"/>
</dbReference>
<dbReference type="SMR" id="Q1J288"/>
<dbReference type="STRING" id="319795.Dgeo_0093"/>
<dbReference type="KEGG" id="dge:Dgeo_0093"/>
<dbReference type="eggNOG" id="COG0181">
    <property type="taxonomic scope" value="Bacteria"/>
</dbReference>
<dbReference type="HOGENOM" id="CLU_019704_0_2_0"/>
<dbReference type="UniPathway" id="UPA00251">
    <property type="reaction ID" value="UER00319"/>
</dbReference>
<dbReference type="Proteomes" id="UP000002431">
    <property type="component" value="Chromosome"/>
</dbReference>
<dbReference type="GO" id="GO:0005737">
    <property type="term" value="C:cytoplasm"/>
    <property type="evidence" value="ECO:0007669"/>
    <property type="project" value="TreeGrafter"/>
</dbReference>
<dbReference type="GO" id="GO:0004418">
    <property type="term" value="F:hydroxymethylbilane synthase activity"/>
    <property type="evidence" value="ECO:0007669"/>
    <property type="project" value="UniProtKB-UniRule"/>
</dbReference>
<dbReference type="GO" id="GO:0006782">
    <property type="term" value="P:protoporphyrinogen IX biosynthetic process"/>
    <property type="evidence" value="ECO:0007669"/>
    <property type="project" value="UniProtKB-UniRule"/>
</dbReference>
<dbReference type="CDD" id="cd13646">
    <property type="entry name" value="PBP2_EcHMBS_like"/>
    <property type="match status" value="1"/>
</dbReference>
<dbReference type="FunFam" id="3.40.190.10:FF:000005">
    <property type="entry name" value="Porphobilinogen deaminase"/>
    <property type="match status" value="1"/>
</dbReference>
<dbReference type="FunFam" id="3.40.190.10:FF:000086">
    <property type="entry name" value="Probable porphobilinogen deaminase"/>
    <property type="match status" value="1"/>
</dbReference>
<dbReference type="Gene3D" id="3.40.190.10">
    <property type="entry name" value="Periplasmic binding protein-like II"/>
    <property type="match status" value="2"/>
</dbReference>
<dbReference type="Gene3D" id="3.30.160.40">
    <property type="entry name" value="Porphobilinogen deaminase, C-terminal domain"/>
    <property type="match status" value="1"/>
</dbReference>
<dbReference type="HAMAP" id="MF_00260">
    <property type="entry name" value="Porphobil_deam"/>
    <property type="match status" value="1"/>
</dbReference>
<dbReference type="InterPro" id="IPR000860">
    <property type="entry name" value="HemC"/>
</dbReference>
<dbReference type="InterPro" id="IPR022419">
    <property type="entry name" value="Porphobilin_deaminase_cofac_BS"/>
</dbReference>
<dbReference type="InterPro" id="IPR022417">
    <property type="entry name" value="Porphobilin_deaminase_N"/>
</dbReference>
<dbReference type="InterPro" id="IPR022418">
    <property type="entry name" value="Porphobilinogen_deaminase_C"/>
</dbReference>
<dbReference type="InterPro" id="IPR036803">
    <property type="entry name" value="Porphobilinogen_deaminase_C_sf"/>
</dbReference>
<dbReference type="NCBIfam" id="TIGR00212">
    <property type="entry name" value="hemC"/>
    <property type="match status" value="1"/>
</dbReference>
<dbReference type="PANTHER" id="PTHR11557">
    <property type="entry name" value="PORPHOBILINOGEN DEAMINASE"/>
    <property type="match status" value="1"/>
</dbReference>
<dbReference type="PANTHER" id="PTHR11557:SF0">
    <property type="entry name" value="PORPHOBILINOGEN DEAMINASE"/>
    <property type="match status" value="1"/>
</dbReference>
<dbReference type="Pfam" id="PF01379">
    <property type="entry name" value="Porphobil_deam"/>
    <property type="match status" value="1"/>
</dbReference>
<dbReference type="Pfam" id="PF03900">
    <property type="entry name" value="Porphobil_deamC"/>
    <property type="match status" value="1"/>
</dbReference>
<dbReference type="PIRSF" id="PIRSF001438">
    <property type="entry name" value="4pyrrol_synth_OHMeBilane_synth"/>
    <property type="match status" value="1"/>
</dbReference>
<dbReference type="PRINTS" id="PR00151">
    <property type="entry name" value="PORPHBDMNASE"/>
</dbReference>
<dbReference type="SUPFAM" id="SSF53850">
    <property type="entry name" value="Periplasmic binding protein-like II"/>
    <property type="match status" value="1"/>
</dbReference>
<dbReference type="SUPFAM" id="SSF54782">
    <property type="entry name" value="Porphobilinogen deaminase (hydroxymethylbilane synthase), C-terminal domain"/>
    <property type="match status" value="1"/>
</dbReference>
<dbReference type="PROSITE" id="PS00533">
    <property type="entry name" value="PORPHOBILINOGEN_DEAM"/>
    <property type="match status" value="1"/>
</dbReference>
<proteinExistence type="inferred from homology"/>
<accession>Q1J288</accession>
<name>HEM3_DEIGD</name>
<protein>
    <recommendedName>
        <fullName evidence="1">Porphobilinogen deaminase</fullName>
        <shortName evidence="1">PBG</shortName>
        <ecNumber evidence="1">2.5.1.61</ecNumber>
    </recommendedName>
    <alternativeName>
        <fullName evidence="1">Hydroxymethylbilane synthase</fullName>
        <shortName evidence="1">HMBS</shortName>
    </alternativeName>
    <alternativeName>
        <fullName evidence="1">Pre-uroporphyrinogen synthase</fullName>
    </alternativeName>
</protein>
<organism>
    <name type="scientific">Deinococcus geothermalis (strain DSM 11300 / CIP 105573 / AG-3a)</name>
    <dbReference type="NCBI Taxonomy" id="319795"/>
    <lineage>
        <taxon>Bacteria</taxon>
        <taxon>Thermotogati</taxon>
        <taxon>Deinococcota</taxon>
        <taxon>Deinococci</taxon>
        <taxon>Deinococcales</taxon>
        <taxon>Deinococcaceae</taxon>
        <taxon>Deinococcus</taxon>
    </lineage>
</organism>
<reference key="1">
    <citation type="submission" date="2006-04" db="EMBL/GenBank/DDBJ databases">
        <title>Complete sequence of chromosome of Deinococcus geothermalis DSM 11300.</title>
        <authorList>
            <person name="Copeland A."/>
            <person name="Lucas S."/>
            <person name="Lapidus A."/>
            <person name="Barry K."/>
            <person name="Detter J.C."/>
            <person name="Glavina del Rio T."/>
            <person name="Hammon N."/>
            <person name="Israni S."/>
            <person name="Dalin E."/>
            <person name="Tice H."/>
            <person name="Pitluck S."/>
            <person name="Brettin T."/>
            <person name="Bruce D."/>
            <person name="Han C."/>
            <person name="Tapia R."/>
            <person name="Saunders E."/>
            <person name="Gilna P."/>
            <person name="Schmutz J."/>
            <person name="Larimer F."/>
            <person name="Land M."/>
            <person name="Hauser L."/>
            <person name="Kyrpides N."/>
            <person name="Kim E."/>
            <person name="Daly M.J."/>
            <person name="Fredrickson J.K."/>
            <person name="Makarova K.S."/>
            <person name="Gaidamakova E.K."/>
            <person name="Zhai M."/>
            <person name="Richardson P."/>
        </authorList>
    </citation>
    <scope>NUCLEOTIDE SEQUENCE [LARGE SCALE GENOMIC DNA]</scope>
    <source>
        <strain>DSM 11300 / CIP 105573 / AG-3a</strain>
    </source>
</reference>
<keyword id="KW-0627">Porphyrin biosynthesis</keyword>
<keyword id="KW-0808">Transferase</keyword>
<evidence type="ECO:0000255" key="1">
    <source>
        <dbReference type="HAMAP-Rule" id="MF_00260"/>
    </source>
</evidence>